<reference key="1">
    <citation type="journal article" date="2000" name="Proc. Natl. Acad. Sci. U.S.A.">
        <title>Archaeal adaptation to higher temperatures revealed by genomic sequence of Thermoplasma volcanium.</title>
        <authorList>
            <person name="Kawashima T."/>
            <person name="Amano N."/>
            <person name="Koike H."/>
            <person name="Makino S."/>
            <person name="Higuchi S."/>
            <person name="Kawashima-Ohya Y."/>
            <person name="Watanabe K."/>
            <person name="Yamazaki M."/>
            <person name="Kanehori K."/>
            <person name="Kawamoto T."/>
            <person name="Nunoshiba T."/>
            <person name="Yamamoto Y."/>
            <person name="Aramaki H."/>
            <person name="Makino K."/>
            <person name="Suzuki M."/>
        </authorList>
    </citation>
    <scope>NUCLEOTIDE SEQUENCE [LARGE SCALE GENOMIC DNA]</scope>
    <source>
        <strain>ATCC 51530 / DSM 4299 / JCM 9571 / NBRC 15438 / GSS1</strain>
    </source>
</reference>
<sequence length="408" mass="44891">MADFFLMDSFDLAGRTIYLRVDINSPVNPVTGEIMGTDRFRAHVETIRKLRDSKVVIVAHQSRPGKDDFTSLRQHAQVMSRILNKKVMFVDQLFGSLVNKTVESMNEGDIVMLENARFYSEEVDLTTLESMENSNIVKGLSTLFDYYIIDAFAAIHRAQTTLVGFRRIKPNIAGALIEKEVTMIDRFRHLNESPKIAILGGAKIDDSIAVSENFLKSGFVDKILTGGVVANAFLWAKGIDIGKKNRDFIIKNNGDYEKLIAKCKGLLSEFGDRILVPSDFILSPSGERVSANGKIPDDQILADIGLDTVVEYSEIIDKAKAIFMNGPMGIYEIEAYSSGTREIFSSVAKSEAFSIAGGGHTLSALDKLGLTNRIDHASTGGGALISYLSGEAMPVLEALKESKRLFEV</sequence>
<gene>
    <name evidence="1" type="primary">pgk</name>
    <name type="ordered locus">TV0530</name>
    <name type="ORF">TVG0521991</name>
</gene>
<comment type="catalytic activity">
    <reaction evidence="1">
        <text>(2R)-3-phosphoglycerate + ATP = (2R)-3-phospho-glyceroyl phosphate + ADP</text>
        <dbReference type="Rhea" id="RHEA:14801"/>
        <dbReference type="ChEBI" id="CHEBI:30616"/>
        <dbReference type="ChEBI" id="CHEBI:57604"/>
        <dbReference type="ChEBI" id="CHEBI:58272"/>
        <dbReference type="ChEBI" id="CHEBI:456216"/>
        <dbReference type="EC" id="2.7.2.3"/>
    </reaction>
</comment>
<comment type="pathway">
    <text evidence="1">Carbohydrate degradation; glycolysis; pyruvate from D-glyceraldehyde 3-phosphate: step 2/5.</text>
</comment>
<comment type="subunit">
    <text evidence="1">Monomer.</text>
</comment>
<comment type="subcellular location">
    <subcellularLocation>
        <location evidence="1">Cytoplasm</location>
    </subcellularLocation>
</comment>
<comment type="similarity">
    <text evidence="1">Belongs to the phosphoglycerate kinase family.</text>
</comment>
<name>PGK_THEVO</name>
<feature type="chain" id="PRO_0000146074" description="Phosphoglycerate kinase">
    <location>
        <begin position="1"/>
        <end position="408"/>
    </location>
</feature>
<feature type="binding site" evidence="1">
    <location>
        <begin position="22"/>
        <end position="24"/>
    </location>
    <ligand>
        <name>substrate</name>
    </ligand>
</feature>
<feature type="binding site" evidence="1">
    <location>
        <position position="39"/>
    </location>
    <ligand>
        <name>substrate</name>
    </ligand>
</feature>
<feature type="binding site" evidence="1">
    <location>
        <begin position="60"/>
        <end position="63"/>
    </location>
    <ligand>
        <name>substrate</name>
    </ligand>
</feature>
<feature type="binding site" evidence="1">
    <location>
        <position position="117"/>
    </location>
    <ligand>
        <name>substrate</name>
    </ligand>
</feature>
<feature type="binding site" evidence="1">
    <location>
        <position position="157"/>
    </location>
    <ligand>
        <name>substrate</name>
    </ligand>
</feature>
<feature type="binding site" evidence="1">
    <location>
        <position position="332"/>
    </location>
    <ligand>
        <name>ATP</name>
        <dbReference type="ChEBI" id="CHEBI:30616"/>
    </ligand>
</feature>
<feature type="binding site" evidence="1">
    <location>
        <begin position="358"/>
        <end position="361"/>
    </location>
    <ligand>
        <name>ATP</name>
        <dbReference type="ChEBI" id="CHEBI:30616"/>
    </ligand>
</feature>
<proteinExistence type="inferred from homology"/>
<evidence type="ECO:0000255" key="1">
    <source>
        <dbReference type="HAMAP-Rule" id="MF_00145"/>
    </source>
</evidence>
<protein>
    <recommendedName>
        <fullName evidence="1">Phosphoglycerate kinase</fullName>
        <ecNumber evidence="1">2.7.2.3</ecNumber>
    </recommendedName>
</protein>
<dbReference type="EC" id="2.7.2.3" evidence="1"/>
<dbReference type="EMBL" id="BA000011">
    <property type="protein sequence ID" value="BAB59672.1"/>
    <property type="molecule type" value="Genomic_DNA"/>
</dbReference>
<dbReference type="RefSeq" id="WP_010916788.1">
    <property type="nucleotide sequence ID" value="NC_002689.2"/>
</dbReference>
<dbReference type="SMR" id="Q97BC6"/>
<dbReference type="STRING" id="273116.gene:9381314"/>
<dbReference type="PaxDb" id="273116-14324745"/>
<dbReference type="GeneID" id="1441046"/>
<dbReference type="KEGG" id="tvo:TVG0521991"/>
<dbReference type="eggNOG" id="arCOG00496">
    <property type="taxonomic scope" value="Archaea"/>
</dbReference>
<dbReference type="HOGENOM" id="CLU_025427_0_2_2"/>
<dbReference type="OrthoDB" id="6575at2157"/>
<dbReference type="PhylomeDB" id="Q97BC6"/>
<dbReference type="UniPathway" id="UPA00109">
    <property type="reaction ID" value="UER00185"/>
</dbReference>
<dbReference type="Proteomes" id="UP000001017">
    <property type="component" value="Chromosome"/>
</dbReference>
<dbReference type="GO" id="GO:0005829">
    <property type="term" value="C:cytosol"/>
    <property type="evidence" value="ECO:0007669"/>
    <property type="project" value="TreeGrafter"/>
</dbReference>
<dbReference type="GO" id="GO:0043531">
    <property type="term" value="F:ADP binding"/>
    <property type="evidence" value="ECO:0007669"/>
    <property type="project" value="TreeGrafter"/>
</dbReference>
<dbReference type="GO" id="GO:0005524">
    <property type="term" value="F:ATP binding"/>
    <property type="evidence" value="ECO:0007669"/>
    <property type="project" value="UniProtKB-KW"/>
</dbReference>
<dbReference type="GO" id="GO:0004618">
    <property type="term" value="F:phosphoglycerate kinase activity"/>
    <property type="evidence" value="ECO:0007669"/>
    <property type="project" value="UniProtKB-UniRule"/>
</dbReference>
<dbReference type="GO" id="GO:0006094">
    <property type="term" value="P:gluconeogenesis"/>
    <property type="evidence" value="ECO:0007669"/>
    <property type="project" value="TreeGrafter"/>
</dbReference>
<dbReference type="GO" id="GO:0006096">
    <property type="term" value="P:glycolytic process"/>
    <property type="evidence" value="ECO:0007669"/>
    <property type="project" value="UniProtKB-UniRule"/>
</dbReference>
<dbReference type="FunFam" id="3.40.50.1260:FF:000006">
    <property type="entry name" value="Phosphoglycerate kinase"/>
    <property type="match status" value="1"/>
</dbReference>
<dbReference type="FunFam" id="3.40.50.1260:FF:000012">
    <property type="entry name" value="Phosphoglycerate kinase"/>
    <property type="match status" value="1"/>
</dbReference>
<dbReference type="Gene3D" id="3.40.50.1260">
    <property type="entry name" value="Phosphoglycerate kinase, N-terminal domain"/>
    <property type="match status" value="2"/>
</dbReference>
<dbReference type="HAMAP" id="MF_00145">
    <property type="entry name" value="Phosphoglyc_kinase"/>
    <property type="match status" value="1"/>
</dbReference>
<dbReference type="InterPro" id="IPR001576">
    <property type="entry name" value="Phosphoglycerate_kinase"/>
</dbReference>
<dbReference type="InterPro" id="IPR015824">
    <property type="entry name" value="Phosphoglycerate_kinase_N"/>
</dbReference>
<dbReference type="InterPro" id="IPR036043">
    <property type="entry name" value="Phosphoglycerate_kinase_sf"/>
</dbReference>
<dbReference type="PANTHER" id="PTHR11406">
    <property type="entry name" value="PHOSPHOGLYCERATE KINASE"/>
    <property type="match status" value="1"/>
</dbReference>
<dbReference type="PANTHER" id="PTHR11406:SF23">
    <property type="entry name" value="PHOSPHOGLYCERATE KINASE 1, CHLOROPLASTIC-RELATED"/>
    <property type="match status" value="1"/>
</dbReference>
<dbReference type="Pfam" id="PF00162">
    <property type="entry name" value="PGK"/>
    <property type="match status" value="1"/>
</dbReference>
<dbReference type="PIRSF" id="PIRSF000724">
    <property type="entry name" value="Pgk"/>
    <property type="match status" value="1"/>
</dbReference>
<dbReference type="PRINTS" id="PR00477">
    <property type="entry name" value="PHGLYCKINASE"/>
</dbReference>
<dbReference type="SUPFAM" id="SSF53748">
    <property type="entry name" value="Phosphoglycerate kinase"/>
    <property type="match status" value="1"/>
</dbReference>
<keyword id="KW-0067">ATP-binding</keyword>
<keyword id="KW-0963">Cytoplasm</keyword>
<keyword id="KW-0324">Glycolysis</keyword>
<keyword id="KW-0418">Kinase</keyword>
<keyword id="KW-0547">Nucleotide-binding</keyword>
<keyword id="KW-0808">Transferase</keyword>
<accession>Q97BC6</accession>
<organism>
    <name type="scientific">Thermoplasma volcanium (strain ATCC 51530 / DSM 4299 / JCM 9571 / NBRC 15438 / GSS1)</name>
    <dbReference type="NCBI Taxonomy" id="273116"/>
    <lineage>
        <taxon>Archaea</taxon>
        <taxon>Methanobacteriati</taxon>
        <taxon>Thermoplasmatota</taxon>
        <taxon>Thermoplasmata</taxon>
        <taxon>Thermoplasmatales</taxon>
        <taxon>Thermoplasmataceae</taxon>
        <taxon>Thermoplasma</taxon>
    </lineage>
</organism>